<organism>
    <name type="scientific">Dictyostelium discoideum</name>
    <name type="common">Social amoeba</name>
    <dbReference type="NCBI Taxonomy" id="44689"/>
    <lineage>
        <taxon>Eukaryota</taxon>
        <taxon>Amoebozoa</taxon>
        <taxon>Evosea</taxon>
        <taxon>Eumycetozoa</taxon>
        <taxon>Dictyostelia</taxon>
        <taxon>Dictyosteliales</taxon>
        <taxon>Dictyosteliaceae</taxon>
        <taxon>Dictyostelium</taxon>
    </lineage>
</organism>
<reference key="1">
    <citation type="journal article" date="2005" name="Nature">
        <title>The genome of the social amoeba Dictyostelium discoideum.</title>
        <authorList>
            <person name="Eichinger L."/>
            <person name="Pachebat J.A."/>
            <person name="Gloeckner G."/>
            <person name="Rajandream M.A."/>
            <person name="Sucgang R."/>
            <person name="Berriman M."/>
            <person name="Song J."/>
            <person name="Olsen R."/>
            <person name="Szafranski K."/>
            <person name="Xu Q."/>
            <person name="Tunggal B."/>
            <person name="Kummerfeld S."/>
            <person name="Madera M."/>
            <person name="Konfortov B.A."/>
            <person name="Rivero F."/>
            <person name="Bankier A.T."/>
            <person name="Lehmann R."/>
            <person name="Hamlin N."/>
            <person name="Davies R."/>
            <person name="Gaudet P."/>
            <person name="Fey P."/>
            <person name="Pilcher K."/>
            <person name="Chen G."/>
            <person name="Saunders D."/>
            <person name="Sodergren E.J."/>
            <person name="Davis P."/>
            <person name="Kerhornou A."/>
            <person name="Nie X."/>
            <person name="Hall N."/>
            <person name="Anjard C."/>
            <person name="Hemphill L."/>
            <person name="Bason N."/>
            <person name="Farbrother P."/>
            <person name="Desany B."/>
            <person name="Just E."/>
            <person name="Morio T."/>
            <person name="Rost R."/>
            <person name="Churcher C.M."/>
            <person name="Cooper J."/>
            <person name="Haydock S."/>
            <person name="van Driessche N."/>
            <person name="Cronin A."/>
            <person name="Goodhead I."/>
            <person name="Muzny D.M."/>
            <person name="Mourier T."/>
            <person name="Pain A."/>
            <person name="Lu M."/>
            <person name="Harper D."/>
            <person name="Lindsay R."/>
            <person name="Hauser H."/>
            <person name="James K.D."/>
            <person name="Quiles M."/>
            <person name="Madan Babu M."/>
            <person name="Saito T."/>
            <person name="Buchrieser C."/>
            <person name="Wardroper A."/>
            <person name="Felder M."/>
            <person name="Thangavelu M."/>
            <person name="Johnson D."/>
            <person name="Knights A."/>
            <person name="Loulseged H."/>
            <person name="Mungall K.L."/>
            <person name="Oliver K."/>
            <person name="Price C."/>
            <person name="Quail M.A."/>
            <person name="Urushihara H."/>
            <person name="Hernandez J."/>
            <person name="Rabbinowitsch E."/>
            <person name="Steffen D."/>
            <person name="Sanders M."/>
            <person name="Ma J."/>
            <person name="Kohara Y."/>
            <person name="Sharp S."/>
            <person name="Simmonds M.N."/>
            <person name="Spiegler S."/>
            <person name="Tivey A."/>
            <person name="Sugano S."/>
            <person name="White B."/>
            <person name="Walker D."/>
            <person name="Woodward J.R."/>
            <person name="Winckler T."/>
            <person name="Tanaka Y."/>
            <person name="Shaulsky G."/>
            <person name="Schleicher M."/>
            <person name="Weinstock G.M."/>
            <person name="Rosenthal A."/>
            <person name="Cox E.C."/>
            <person name="Chisholm R.L."/>
            <person name="Gibbs R.A."/>
            <person name="Loomis W.F."/>
            <person name="Platzer M."/>
            <person name="Kay R.R."/>
            <person name="Williams J.G."/>
            <person name="Dear P.H."/>
            <person name="Noegel A.A."/>
            <person name="Barrell B.G."/>
            <person name="Kuspa A."/>
        </authorList>
    </citation>
    <scope>NUCLEOTIDE SEQUENCE [LARGE SCALE GENOMIC DNA]</scope>
    <source>
        <strain>AX4</strain>
    </source>
</reference>
<sequence length="1130" mass="128285">MSEELKSLIQPHIDSFDFFTDHGIDLVLKDSEPLYFEHNSTQYKIRFTDLKLSRPTRNIVEKEIKLYPNESRETGTTYNAPFKGAIGLYEVNEMDEMDDGTEVDYNKQEPTHTFEVDLGRLPIMVKSRYCHLNGMSPEKLIESREEELEQGGYFIVNGNEKVVRMLVMTKANHPVALHRKAWTNRGPGYTKNGITIRCVRPDRSSITNNLHYINDGQTTLRFLYRRQEFFLPATLLLKALKDTTEKEIYENIVQGDNENTFLTDRVELSLREQKINNINTQEEVLDYIGSRFRARTQFPPSFSNIKIGRWFINQFVFVHLPNYNDKYNLLILMIQKLYAMVGGKCGTDNIDSPAFQEVLLAGHIYGMILKEKLTEYLESTKSFVLKSFEDKKKSGDKLPDALKKVLDKNFKIADRFSYFLATGNLRSSSGIDLQQTSGFCVIADKLNFLRFISHFRSIHRGAFFATMKTTAIRKLMPESWGFFCPVHTPDGAPCGLLNHLSSNCLVTVDAAQDPTVQKAQTLLPSFLAAHGMLPIDMVSVYQHQYLTITLDGRVLGKIEPKAGEEMVKMLRYLRSMGNEPSIPKTMEISYAPPTNVENGQYSGISLFTTGARFMRPVVNLTSGQNELIGPQEQLYMEIAVVPHEVIKGVTTHIETSPTAMFSLLANLTPFSDYNQSPRNMYQCQMAKQTMGTPLHSYPFRTDNKLYKVQNVQKPIVHTKNQFKFRCNDYPHGCNAVIAVISNTGYDMEDAMIINKSAYERGFGHGSVYKNEYIDLDQGLSRFEQKKTFFGRPNTVVDELDKFIDTDGLPFVGRLIKPGEPYYTYIRPSDGRQVTKDYKGKEEAYIEDVRIIFGPNGATRDPSKINNICVKLRFNRNPVIGDKFSSRHGQKGVLSQLWPEINMPFTESGMKPDVIINPNAFPSRMTIGMLVEILAGKAGAIHGKFQDATAFQFDENNTAIDFFGEQLAKAGFNRFGNEQMYSGTTGKEFECEIFFGVCYYQRLRHMVKDKYQVRALGKVNALTRQPIKGRKVGGGIRFGEMERDSLLAHGASFCLNDRLMKSSDFAKIKVCKLCGSTLTIYSKKDYSNQTVSECKSCKSSDSIATISIPYVFTYLVAELAAVNITMKLQVS</sequence>
<keyword id="KW-0240">DNA-directed RNA polymerase</keyword>
<keyword id="KW-0479">Metal-binding</keyword>
<keyword id="KW-0548">Nucleotidyltransferase</keyword>
<keyword id="KW-0539">Nucleus</keyword>
<keyword id="KW-0597">Phosphoprotein</keyword>
<keyword id="KW-1185">Reference proteome</keyword>
<keyword id="KW-0804">Transcription</keyword>
<keyword id="KW-0808">Transferase</keyword>
<keyword id="KW-0862">Zinc</keyword>
<keyword id="KW-0863">Zinc-finger</keyword>
<accession>Q54BM1</accession>
<comment type="function">
    <text evidence="1">DNA-dependent RNA polymerase catalyzes the transcription of DNA into RNA using the four ribonucleoside triphosphates as substrates. Second largest core component of RNA polymerase I which synthesizes ribosomal RNA precursors. Proposed to contribute to the polymerase catalytic activity and forms the polymerase active center together with the largest subunit. Pol I is composed of mobile elements and RPA2 is part of the core element with the central large cleft and probably a clamp element that moves to open and close the cleft (By similarity).</text>
</comment>
<comment type="catalytic activity">
    <reaction evidence="1">
        <text>RNA(n) + a ribonucleoside 5'-triphosphate = RNA(n+1) + diphosphate</text>
        <dbReference type="Rhea" id="RHEA:21248"/>
        <dbReference type="Rhea" id="RHEA-COMP:14527"/>
        <dbReference type="Rhea" id="RHEA-COMP:17342"/>
        <dbReference type="ChEBI" id="CHEBI:33019"/>
        <dbReference type="ChEBI" id="CHEBI:61557"/>
        <dbReference type="ChEBI" id="CHEBI:140395"/>
        <dbReference type="EC" id="2.7.7.6"/>
    </reaction>
    <physiologicalReaction direction="left-to-right" evidence="1">
        <dbReference type="Rhea" id="RHEA:21249"/>
    </physiologicalReaction>
</comment>
<comment type="subunit">
    <text evidence="1">Component of the RNA polymerase I (Pol I) complex consisting of 14 subunits.</text>
</comment>
<comment type="subcellular location">
    <subcellularLocation>
        <location evidence="1">Nucleus</location>
        <location evidence="1">Nucleolus</location>
    </subcellularLocation>
</comment>
<comment type="miscellaneous">
    <text>Three distinct zinc-containing RNA polymerases are found in eukaryotic nuclei: polymerase I for the ribosomal RNA precursor, polymerase II for the mRNA precursor, and polymerase III for 5S and tRNA genes.</text>
</comment>
<comment type="similarity">
    <text evidence="2">Belongs to the RNA polymerase beta chain family.</text>
</comment>
<proteinExistence type="inferred from homology"/>
<feature type="chain" id="PRO_0000327638" description="DNA-directed RNA polymerase I subunit rpa2">
    <location>
        <begin position="1"/>
        <end position="1130"/>
    </location>
</feature>
<feature type="zinc finger region" description="C4-type" evidence="1">
    <location>
        <begin position="1070"/>
        <end position="1096"/>
    </location>
</feature>
<gene>
    <name type="primary">polr1b</name>
    <name type="synonym">rpa2</name>
    <name type="ORF">DDB_G0293560</name>
</gene>
<dbReference type="EC" id="2.7.7.6" evidence="1"/>
<dbReference type="EMBL" id="AAFI02000218">
    <property type="protein sequence ID" value="EAL60592.1"/>
    <property type="molecule type" value="Genomic_DNA"/>
</dbReference>
<dbReference type="RefSeq" id="XP_629008.1">
    <property type="nucleotide sequence ID" value="XM_629006.1"/>
</dbReference>
<dbReference type="SMR" id="Q54BM1"/>
<dbReference type="FunCoup" id="Q54BM1">
    <property type="interactions" value="477"/>
</dbReference>
<dbReference type="STRING" id="44689.Q54BM1"/>
<dbReference type="PaxDb" id="44689-DDB0216278"/>
<dbReference type="EnsemblProtists" id="EAL60592">
    <property type="protein sequence ID" value="EAL60592"/>
    <property type="gene ID" value="DDB_G0293560"/>
</dbReference>
<dbReference type="GeneID" id="8629292"/>
<dbReference type="KEGG" id="ddi:DDB_G0293560"/>
<dbReference type="dictyBase" id="DDB_G0293560">
    <property type="gene designation" value="rpa2"/>
</dbReference>
<dbReference type="VEuPathDB" id="AmoebaDB:DDB_G0293560"/>
<dbReference type="eggNOG" id="KOG0216">
    <property type="taxonomic scope" value="Eukaryota"/>
</dbReference>
<dbReference type="HOGENOM" id="CLU_000524_5_1_1"/>
<dbReference type="InParanoid" id="Q54BM1"/>
<dbReference type="OMA" id="FFGVVHY"/>
<dbReference type="PhylomeDB" id="Q54BM1"/>
<dbReference type="Reactome" id="R-DDI-73762">
    <property type="pathway name" value="RNA Polymerase I Transcription Initiation"/>
</dbReference>
<dbReference type="Reactome" id="R-DDI-73772">
    <property type="pathway name" value="RNA Polymerase I Promoter Escape"/>
</dbReference>
<dbReference type="PRO" id="PR:Q54BM1"/>
<dbReference type="Proteomes" id="UP000002195">
    <property type="component" value="Chromosome 6"/>
</dbReference>
<dbReference type="GO" id="GO:0005739">
    <property type="term" value="C:mitochondrion"/>
    <property type="evidence" value="ECO:0007669"/>
    <property type="project" value="GOC"/>
</dbReference>
<dbReference type="GO" id="GO:0005730">
    <property type="term" value="C:nucleolus"/>
    <property type="evidence" value="ECO:0000250"/>
    <property type="project" value="dictyBase"/>
</dbReference>
<dbReference type="GO" id="GO:0005736">
    <property type="term" value="C:RNA polymerase I complex"/>
    <property type="evidence" value="ECO:0000250"/>
    <property type="project" value="dictyBase"/>
</dbReference>
<dbReference type="GO" id="GO:0003677">
    <property type="term" value="F:DNA binding"/>
    <property type="evidence" value="ECO:0007669"/>
    <property type="project" value="InterPro"/>
</dbReference>
<dbReference type="GO" id="GO:0003899">
    <property type="term" value="F:DNA-directed RNA polymerase activity"/>
    <property type="evidence" value="ECO:0000250"/>
    <property type="project" value="dictyBase"/>
</dbReference>
<dbReference type="GO" id="GO:0032549">
    <property type="term" value="F:ribonucleoside binding"/>
    <property type="evidence" value="ECO:0007669"/>
    <property type="project" value="InterPro"/>
</dbReference>
<dbReference type="GO" id="GO:0008270">
    <property type="term" value="F:zinc ion binding"/>
    <property type="evidence" value="ECO:0007669"/>
    <property type="project" value="UniProtKB-KW"/>
</dbReference>
<dbReference type="GO" id="GO:0006360">
    <property type="term" value="P:transcription by RNA polymerase I"/>
    <property type="evidence" value="ECO:0000250"/>
    <property type="project" value="dictyBase"/>
</dbReference>
<dbReference type="CDD" id="cd00653">
    <property type="entry name" value="RNA_pol_B_RPB2"/>
    <property type="match status" value="1"/>
</dbReference>
<dbReference type="FunFam" id="2.40.270.10:FF:000011">
    <property type="entry name" value="DNA-directed RNA polymerase subunit beta"/>
    <property type="match status" value="1"/>
</dbReference>
<dbReference type="FunFam" id="3.90.1100.10:FF:000016">
    <property type="entry name" value="DNA-directed RNA polymerase subunit beta"/>
    <property type="match status" value="1"/>
</dbReference>
<dbReference type="FunFam" id="3.90.1110.10:FF:000007">
    <property type="entry name" value="DNA-directed RNA polymerase subunit beta"/>
    <property type="match status" value="1"/>
</dbReference>
<dbReference type="FunFam" id="3.90.1800.10:FF:000004">
    <property type="entry name" value="DNA-directed RNA polymerase subunit beta"/>
    <property type="match status" value="1"/>
</dbReference>
<dbReference type="Gene3D" id="2.40.50.150">
    <property type="match status" value="1"/>
</dbReference>
<dbReference type="Gene3D" id="3.90.1100.10">
    <property type="match status" value="2"/>
</dbReference>
<dbReference type="Gene3D" id="2.40.270.10">
    <property type="entry name" value="DNA-directed RNA polymerase, subunit 2, domain 6"/>
    <property type="match status" value="1"/>
</dbReference>
<dbReference type="Gene3D" id="3.90.1800.10">
    <property type="entry name" value="RNA polymerase alpha subunit dimerisation domain"/>
    <property type="match status" value="1"/>
</dbReference>
<dbReference type="Gene3D" id="3.90.1110.10">
    <property type="entry name" value="RNA polymerase Rpb2, domain 2"/>
    <property type="match status" value="1"/>
</dbReference>
<dbReference type="InterPro" id="IPR015712">
    <property type="entry name" value="DNA-dir_RNA_pol_su2"/>
</dbReference>
<dbReference type="InterPro" id="IPR007120">
    <property type="entry name" value="DNA-dir_RNAP_su2_dom"/>
</dbReference>
<dbReference type="InterPro" id="IPR037033">
    <property type="entry name" value="DNA-dir_RNAP_su2_hyb_sf"/>
</dbReference>
<dbReference type="InterPro" id="IPR007121">
    <property type="entry name" value="RNA_pol_bsu_CS"/>
</dbReference>
<dbReference type="InterPro" id="IPR007644">
    <property type="entry name" value="RNA_pol_bsu_protrusion"/>
</dbReference>
<dbReference type="InterPro" id="IPR007642">
    <property type="entry name" value="RNA_pol_Rpb2_2"/>
</dbReference>
<dbReference type="InterPro" id="IPR037034">
    <property type="entry name" value="RNA_pol_Rpb2_2_sf"/>
</dbReference>
<dbReference type="InterPro" id="IPR007645">
    <property type="entry name" value="RNA_pol_Rpb2_3"/>
</dbReference>
<dbReference type="InterPro" id="IPR007641">
    <property type="entry name" value="RNA_pol_Rpb2_7"/>
</dbReference>
<dbReference type="InterPro" id="IPR014724">
    <property type="entry name" value="RNA_pol_RPB2_OB-fold"/>
</dbReference>
<dbReference type="InterPro" id="IPR009674">
    <property type="entry name" value="Rpa2_dom_4"/>
</dbReference>
<dbReference type="PANTHER" id="PTHR20856">
    <property type="entry name" value="DNA-DIRECTED RNA POLYMERASE I SUBUNIT 2"/>
    <property type="match status" value="1"/>
</dbReference>
<dbReference type="Pfam" id="PF06883">
    <property type="entry name" value="RNA_pol_Rpa2_4"/>
    <property type="match status" value="1"/>
</dbReference>
<dbReference type="Pfam" id="PF04563">
    <property type="entry name" value="RNA_pol_Rpb2_1"/>
    <property type="match status" value="1"/>
</dbReference>
<dbReference type="Pfam" id="PF04561">
    <property type="entry name" value="RNA_pol_Rpb2_2"/>
    <property type="match status" value="1"/>
</dbReference>
<dbReference type="Pfam" id="PF04565">
    <property type="entry name" value="RNA_pol_Rpb2_3"/>
    <property type="match status" value="1"/>
</dbReference>
<dbReference type="Pfam" id="PF00562">
    <property type="entry name" value="RNA_pol_Rpb2_6"/>
    <property type="match status" value="1"/>
</dbReference>
<dbReference type="Pfam" id="PF04560">
    <property type="entry name" value="RNA_pol_Rpb2_7"/>
    <property type="match status" value="1"/>
</dbReference>
<dbReference type="SUPFAM" id="SSF64484">
    <property type="entry name" value="beta and beta-prime subunits of DNA dependent RNA-polymerase"/>
    <property type="match status" value="1"/>
</dbReference>
<dbReference type="PROSITE" id="PS01166">
    <property type="entry name" value="RNA_POL_BETA"/>
    <property type="match status" value="1"/>
</dbReference>
<evidence type="ECO:0000250" key="1">
    <source>
        <dbReference type="UniProtKB" id="P22138"/>
    </source>
</evidence>
<evidence type="ECO:0000305" key="2"/>
<protein>
    <recommendedName>
        <fullName>DNA-directed RNA polymerase I subunit rpa2</fullName>
        <ecNumber evidence="1">2.7.7.6</ecNumber>
    </recommendedName>
    <alternativeName>
        <fullName>DNA-directed RNA polymerase I polypeptide 2</fullName>
        <shortName>RNA polymerase I subunit 2</shortName>
    </alternativeName>
</protein>
<name>RPA2_DICDI</name>